<comment type="function">
    <text evidence="1">Required for the formation of a threonylcarbamoyl group on adenosine at position 37 (t(6)A37) in tRNAs that read codons beginning with adenine. Catalyzes the conversion of L-threonine, HCO(3)(-)/CO(2) and ATP to give threonylcarbamoyl-AMP (TC-AMP) as the acyladenylate intermediate, with the release of diphosphate.</text>
</comment>
<comment type="catalytic activity">
    <reaction evidence="1">
        <text>L-threonine + hydrogencarbonate + ATP = L-threonylcarbamoyladenylate + diphosphate + H2O</text>
        <dbReference type="Rhea" id="RHEA:36407"/>
        <dbReference type="ChEBI" id="CHEBI:15377"/>
        <dbReference type="ChEBI" id="CHEBI:17544"/>
        <dbReference type="ChEBI" id="CHEBI:30616"/>
        <dbReference type="ChEBI" id="CHEBI:33019"/>
        <dbReference type="ChEBI" id="CHEBI:57926"/>
        <dbReference type="ChEBI" id="CHEBI:73682"/>
        <dbReference type="EC" id="2.7.7.87"/>
    </reaction>
</comment>
<comment type="subcellular location">
    <subcellularLocation>
        <location evidence="1">Cytoplasm</location>
    </subcellularLocation>
</comment>
<comment type="similarity">
    <text evidence="1">Belongs to the SUA5 family. TsaC subfamily.</text>
</comment>
<keyword id="KW-0067">ATP-binding</keyword>
<keyword id="KW-0963">Cytoplasm</keyword>
<keyword id="KW-0547">Nucleotide-binding</keyword>
<keyword id="KW-0548">Nucleotidyltransferase</keyword>
<keyword id="KW-1185">Reference proteome</keyword>
<keyword id="KW-0808">Transferase</keyword>
<keyword id="KW-0819">tRNA processing</keyword>
<evidence type="ECO:0000255" key="1">
    <source>
        <dbReference type="HAMAP-Rule" id="MF_01852"/>
    </source>
</evidence>
<sequence>MSTAESREGAQPGLHAYLRRGGVIAYPTESCYGLGCDPRNAAALRRLIRLKGRDAGKGMLLIADRYRRLQPFVGALSPTGRARMRRSWPGPVTWVVPASRRCPPELTGGRTTVAVRVTAHRPAAALCRSLGTALVSTSANKSGHTPAKTAAQCRRMFGARVRVVDGRIGTRRRPSTLIDLATGKILRA</sequence>
<proteinExistence type="inferred from homology"/>
<reference key="1">
    <citation type="journal article" date="2006" name="J. Bacteriol.">
        <title>The genome sequence of the obligately chemolithoautotrophic, facultatively anaerobic bacterium Thiobacillus denitrificans.</title>
        <authorList>
            <person name="Beller H.R."/>
            <person name="Chain P.S."/>
            <person name="Letain T.E."/>
            <person name="Chakicherla A."/>
            <person name="Larimer F.W."/>
            <person name="Richardson P.M."/>
            <person name="Coleman M.A."/>
            <person name="Wood A.P."/>
            <person name="Kelly D.P."/>
        </authorList>
    </citation>
    <scope>NUCLEOTIDE SEQUENCE [LARGE SCALE GENOMIC DNA]</scope>
    <source>
        <strain>ATCC 25259 / T1</strain>
    </source>
</reference>
<feature type="chain" id="PRO_0000352999" description="Threonylcarbamoyl-AMP synthase">
    <location>
        <begin position="1"/>
        <end position="188"/>
    </location>
</feature>
<feature type="domain" description="YrdC-like" evidence="1">
    <location>
        <begin position="8"/>
        <end position="188"/>
    </location>
</feature>
<gene>
    <name evidence="1" type="primary">tsaC</name>
    <name type="synonym">rimN</name>
    <name type="ordered locus">Tbd_2460</name>
</gene>
<protein>
    <recommendedName>
        <fullName evidence="1">Threonylcarbamoyl-AMP synthase</fullName>
        <shortName evidence="1">TC-AMP synthase</shortName>
        <ecNumber evidence="1">2.7.7.87</ecNumber>
    </recommendedName>
    <alternativeName>
        <fullName evidence="1">L-threonylcarbamoyladenylate synthase</fullName>
    </alternativeName>
    <alternativeName>
        <fullName evidence="1">t(6)A37 threonylcarbamoyladenosine biosynthesis protein TsaC</fullName>
    </alternativeName>
    <alternativeName>
        <fullName evidence="1">tRNA threonylcarbamoyladenosine biosynthesis protein TsaC</fullName>
    </alternativeName>
</protein>
<organism>
    <name type="scientific">Thiobacillus denitrificans (strain ATCC 25259 / T1)</name>
    <dbReference type="NCBI Taxonomy" id="292415"/>
    <lineage>
        <taxon>Bacteria</taxon>
        <taxon>Pseudomonadati</taxon>
        <taxon>Pseudomonadota</taxon>
        <taxon>Betaproteobacteria</taxon>
        <taxon>Nitrosomonadales</taxon>
        <taxon>Thiobacillaceae</taxon>
        <taxon>Thiobacillus</taxon>
    </lineage>
</organism>
<accession>Q3SG43</accession>
<name>TSAC_THIDA</name>
<dbReference type="EC" id="2.7.7.87" evidence="1"/>
<dbReference type="EMBL" id="CP000116">
    <property type="protein sequence ID" value="AAZ98413.1"/>
    <property type="molecule type" value="Genomic_DNA"/>
</dbReference>
<dbReference type="RefSeq" id="WP_011312972.1">
    <property type="nucleotide sequence ID" value="NC_007404.1"/>
</dbReference>
<dbReference type="SMR" id="Q3SG43"/>
<dbReference type="STRING" id="292415.Tbd_2460"/>
<dbReference type="KEGG" id="tbd:Tbd_2460"/>
<dbReference type="eggNOG" id="COG0009">
    <property type="taxonomic scope" value="Bacteria"/>
</dbReference>
<dbReference type="HOGENOM" id="CLU_031397_6_1_4"/>
<dbReference type="OrthoDB" id="9814580at2"/>
<dbReference type="Proteomes" id="UP000008291">
    <property type="component" value="Chromosome"/>
</dbReference>
<dbReference type="GO" id="GO:0005737">
    <property type="term" value="C:cytoplasm"/>
    <property type="evidence" value="ECO:0007669"/>
    <property type="project" value="UniProtKB-SubCell"/>
</dbReference>
<dbReference type="GO" id="GO:0005524">
    <property type="term" value="F:ATP binding"/>
    <property type="evidence" value="ECO:0007669"/>
    <property type="project" value="UniProtKB-UniRule"/>
</dbReference>
<dbReference type="GO" id="GO:0003725">
    <property type="term" value="F:double-stranded RNA binding"/>
    <property type="evidence" value="ECO:0007669"/>
    <property type="project" value="InterPro"/>
</dbReference>
<dbReference type="GO" id="GO:0061710">
    <property type="term" value="F:L-threonylcarbamoyladenylate synthase"/>
    <property type="evidence" value="ECO:0007669"/>
    <property type="project" value="UniProtKB-EC"/>
</dbReference>
<dbReference type="GO" id="GO:0000049">
    <property type="term" value="F:tRNA binding"/>
    <property type="evidence" value="ECO:0007669"/>
    <property type="project" value="TreeGrafter"/>
</dbReference>
<dbReference type="GO" id="GO:0006450">
    <property type="term" value="P:regulation of translational fidelity"/>
    <property type="evidence" value="ECO:0007669"/>
    <property type="project" value="TreeGrafter"/>
</dbReference>
<dbReference type="GO" id="GO:0002949">
    <property type="term" value="P:tRNA threonylcarbamoyladenosine modification"/>
    <property type="evidence" value="ECO:0007669"/>
    <property type="project" value="UniProtKB-UniRule"/>
</dbReference>
<dbReference type="Gene3D" id="3.90.870.10">
    <property type="entry name" value="DHBP synthase"/>
    <property type="match status" value="1"/>
</dbReference>
<dbReference type="HAMAP" id="MF_01852">
    <property type="entry name" value="TsaC"/>
    <property type="match status" value="1"/>
</dbReference>
<dbReference type="InterPro" id="IPR017945">
    <property type="entry name" value="DHBP_synth_RibB-like_a/b_dom"/>
</dbReference>
<dbReference type="InterPro" id="IPR006070">
    <property type="entry name" value="Sua5-like_dom"/>
</dbReference>
<dbReference type="InterPro" id="IPR023535">
    <property type="entry name" value="TC-AMP_synthase"/>
</dbReference>
<dbReference type="InterPro" id="IPR050156">
    <property type="entry name" value="TC-AMP_synthase_SUA5"/>
</dbReference>
<dbReference type="PANTHER" id="PTHR17490">
    <property type="entry name" value="SUA5"/>
    <property type="match status" value="1"/>
</dbReference>
<dbReference type="PANTHER" id="PTHR17490:SF18">
    <property type="entry name" value="THREONYLCARBAMOYL-AMP SYNTHASE"/>
    <property type="match status" value="1"/>
</dbReference>
<dbReference type="Pfam" id="PF01300">
    <property type="entry name" value="Sua5_yciO_yrdC"/>
    <property type="match status" value="1"/>
</dbReference>
<dbReference type="SUPFAM" id="SSF55821">
    <property type="entry name" value="YrdC/RibB"/>
    <property type="match status" value="1"/>
</dbReference>
<dbReference type="PROSITE" id="PS51163">
    <property type="entry name" value="YRDC"/>
    <property type="match status" value="1"/>
</dbReference>